<protein>
    <recommendedName>
        <fullName evidence="5">Small ribosomal subunit protein mL104 (rPPR9)</fullName>
    </recommendedName>
    <alternativeName>
        <fullName>PPR PROTEIN LOCALIZED TO THE NUCLEUS AND MITOCHONDRIA 1</fullName>
    </alternativeName>
    <alternativeName>
        <fullName>Pentatricopeptide repeat-containing protein PNM1, mitochondrial</fullName>
    </alternativeName>
</protein>
<gene>
    <name type="primary">PNM1</name>
    <name type="ordered locus">At5g60960</name>
    <name type="ORF">MSL3.8</name>
</gene>
<dbReference type="EMBL" id="AB008269">
    <property type="protein sequence ID" value="BAB10645.1"/>
    <property type="molecule type" value="Genomic_DNA"/>
</dbReference>
<dbReference type="EMBL" id="CP002688">
    <property type="protein sequence ID" value="AED97403.1"/>
    <property type="molecule type" value="Genomic_DNA"/>
</dbReference>
<dbReference type="EMBL" id="AY086450">
    <property type="protein sequence ID" value="AAM63453.1"/>
    <property type="molecule type" value="mRNA"/>
</dbReference>
<dbReference type="RefSeq" id="NP_200904.1">
    <property type="nucleotide sequence ID" value="NM_125489.3"/>
</dbReference>
<dbReference type="PDB" id="6XYW">
    <property type="method" value="EM"/>
    <property type="resolution" value="3.86 A"/>
    <property type="chains" value="AQ=1-521"/>
</dbReference>
<dbReference type="PDBsum" id="6XYW"/>
<dbReference type="EMDB" id="EMD-10654"/>
<dbReference type="SMR" id="Q9FME4"/>
<dbReference type="BioGRID" id="21461">
    <property type="interactions" value="5"/>
</dbReference>
<dbReference type="FunCoup" id="Q9FME4">
    <property type="interactions" value="1998"/>
</dbReference>
<dbReference type="IntAct" id="Q9FME4">
    <property type="interactions" value="5"/>
</dbReference>
<dbReference type="STRING" id="3702.Q9FME4"/>
<dbReference type="iPTMnet" id="Q9FME4"/>
<dbReference type="PaxDb" id="3702-AT5G60960.1"/>
<dbReference type="ProteomicsDB" id="249319"/>
<dbReference type="EnsemblPlants" id="AT5G60960.1">
    <property type="protein sequence ID" value="AT5G60960.1"/>
    <property type="gene ID" value="AT5G60960"/>
</dbReference>
<dbReference type="GeneID" id="836217"/>
<dbReference type="Gramene" id="AT5G60960.1">
    <property type="protein sequence ID" value="AT5G60960.1"/>
    <property type="gene ID" value="AT5G60960"/>
</dbReference>
<dbReference type="KEGG" id="ath:AT5G60960"/>
<dbReference type="Araport" id="AT5G60960"/>
<dbReference type="TAIR" id="AT5G60960">
    <property type="gene designation" value="PNM1"/>
</dbReference>
<dbReference type="eggNOG" id="KOG4197">
    <property type="taxonomic scope" value="Eukaryota"/>
</dbReference>
<dbReference type="HOGENOM" id="CLU_041224_0_0_1"/>
<dbReference type="InParanoid" id="Q9FME4"/>
<dbReference type="OMA" id="GKLCAHG"/>
<dbReference type="OrthoDB" id="1891108at2759"/>
<dbReference type="PhylomeDB" id="Q9FME4"/>
<dbReference type="PRO" id="PR:Q9FME4"/>
<dbReference type="Proteomes" id="UP000006548">
    <property type="component" value="Chromosome 5"/>
</dbReference>
<dbReference type="ExpressionAtlas" id="Q9FME4">
    <property type="expression patterns" value="baseline and differential"/>
</dbReference>
<dbReference type="GO" id="GO:0005759">
    <property type="term" value="C:mitochondrial matrix"/>
    <property type="evidence" value="ECO:0007669"/>
    <property type="project" value="UniProtKB-SubCell"/>
</dbReference>
<dbReference type="GO" id="GO:0005739">
    <property type="term" value="C:mitochondrion"/>
    <property type="evidence" value="ECO:0000314"/>
    <property type="project" value="TAIR"/>
</dbReference>
<dbReference type="GO" id="GO:0005634">
    <property type="term" value="C:nucleus"/>
    <property type="evidence" value="ECO:0000314"/>
    <property type="project" value="TAIR"/>
</dbReference>
<dbReference type="GO" id="GO:1990904">
    <property type="term" value="C:ribonucleoprotein complex"/>
    <property type="evidence" value="ECO:0007669"/>
    <property type="project" value="UniProtKB-KW"/>
</dbReference>
<dbReference type="GO" id="GO:0005840">
    <property type="term" value="C:ribosome"/>
    <property type="evidence" value="ECO:0007669"/>
    <property type="project" value="UniProtKB-KW"/>
</dbReference>
<dbReference type="GO" id="GO:0003729">
    <property type="term" value="F:mRNA binding"/>
    <property type="evidence" value="ECO:0000314"/>
    <property type="project" value="TAIR"/>
</dbReference>
<dbReference type="GO" id="GO:0003723">
    <property type="term" value="F:RNA binding"/>
    <property type="evidence" value="ECO:0000314"/>
    <property type="project" value="TAIR"/>
</dbReference>
<dbReference type="GO" id="GO:0006417">
    <property type="term" value="P:regulation of translation"/>
    <property type="evidence" value="ECO:0007669"/>
    <property type="project" value="UniProtKB-KW"/>
</dbReference>
<dbReference type="FunFam" id="1.25.40.10:FF:000759">
    <property type="entry name" value="Pentatricopeptide repeat-containing protein PNM1 mitochondrial"/>
    <property type="match status" value="1"/>
</dbReference>
<dbReference type="FunFam" id="1.25.40.10:FF:000897">
    <property type="entry name" value="Pentatricopeptide repeat-containing protein PNM1, mitochondrial"/>
    <property type="match status" value="1"/>
</dbReference>
<dbReference type="FunFam" id="1.25.40.10:FF:000398">
    <property type="entry name" value="pentatricopeptide repeat-containing protein PNM1, mitochondrial"/>
    <property type="match status" value="1"/>
</dbReference>
<dbReference type="Gene3D" id="1.25.40.10">
    <property type="entry name" value="Tetratricopeptide repeat domain"/>
    <property type="match status" value="3"/>
</dbReference>
<dbReference type="InterPro" id="IPR051240">
    <property type="entry name" value="Mito_RNA-Proc/Resp"/>
</dbReference>
<dbReference type="InterPro" id="IPR002885">
    <property type="entry name" value="Pentatricopeptide_rpt"/>
</dbReference>
<dbReference type="InterPro" id="IPR011990">
    <property type="entry name" value="TPR-like_helical_dom_sf"/>
</dbReference>
<dbReference type="NCBIfam" id="TIGR00756">
    <property type="entry name" value="PPR"/>
    <property type="match status" value="2"/>
</dbReference>
<dbReference type="PANTHER" id="PTHR47933">
    <property type="entry name" value="PENTATRICOPEPTIDE REPEAT-CONTAINING PROTEIN 1, MITOCHONDRIAL"/>
    <property type="match status" value="1"/>
</dbReference>
<dbReference type="PANTHER" id="PTHR47933:SF11">
    <property type="entry name" value="PENTATRICOPEPTIDE REPEAT-CONTAINING PROTEIN 2"/>
    <property type="match status" value="1"/>
</dbReference>
<dbReference type="Pfam" id="PF01535">
    <property type="entry name" value="PPR"/>
    <property type="match status" value="1"/>
</dbReference>
<dbReference type="Pfam" id="PF13041">
    <property type="entry name" value="PPR_2"/>
    <property type="match status" value="1"/>
</dbReference>
<dbReference type="Pfam" id="PF13812">
    <property type="entry name" value="PPR_3"/>
    <property type="match status" value="1"/>
</dbReference>
<dbReference type="PROSITE" id="PS51375">
    <property type="entry name" value="PPR"/>
    <property type="match status" value="8"/>
</dbReference>
<organism>
    <name type="scientific">Arabidopsis thaliana</name>
    <name type="common">Mouse-ear cress</name>
    <dbReference type="NCBI Taxonomy" id="3702"/>
    <lineage>
        <taxon>Eukaryota</taxon>
        <taxon>Viridiplantae</taxon>
        <taxon>Streptophyta</taxon>
        <taxon>Embryophyta</taxon>
        <taxon>Tracheophyta</taxon>
        <taxon>Spermatophyta</taxon>
        <taxon>Magnoliopsida</taxon>
        <taxon>eudicotyledons</taxon>
        <taxon>Gunneridae</taxon>
        <taxon>Pentapetalae</taxon>
        <taxon>rosids</taxon>
        <taxon>malvids</taxon>
        <taxon>Brassicales</taxon>
        <taxon>Brassicaceae</taxon>
        <taxon>Camelineae</taxon>
        <taxon>Arabidopsis</taxon>
    </lineage>
</organism>
<sequence>MPPSLPSLQLRRLLLRSFISSSSVNTLQSQPRIISSKPLFSPLPPSRSSIFSTFPSRFFSSETNAESESLDSNEIALSFSKELTGNPDAESQTISQRFNLSFSHITPNPDLILQTLNLSPEAGRAALGFNEWLDSNSNFSHTDETVSFFVDYFGRRKDFKGMLEIISKYKGIAGGKTLESAIDRLVRAGRPKQVTDFFEKMENDYGLKRDKESLTLVVKKLCEKGHASIAEKMVKNTANEIFPDENICDLLISGWCIAEKLDEATRLAGEMSRGGFEIGTKAYNMMLDCVCKLCRKKDPFKLQPEVEKVLLEMEFRGVPRNTETFNVLINNLCKIRRTEEAMTLFGRMGEWGCQPDAETYLVLIRSLYQAARIGEGDEMIDKMKSAGYGELLNKKEYYGFLKILCGIERLEHAMSVFKSMKANGCKPGIKTYDLLMGKMCANNQLTRANGLYKEAAKKGIAVSPKEYRVDPRFMKKKTKEVDSNVKKRETLPEKTARKKKRLKQINMSFVKKPHNKMRRRM</sequence>
<evidence type="ECO:0000255" key="1"/>
<evidence type="ECO:0000256" key="2">
    <source>
        <dbReference type="SAM" id="MobiDB-lite"/>
    </source>
</evidence>
<evidence type="ECO:0000269" key="3">
    <source>
    </source>
</evidence>
<evidence type="ECO:0000269" key="4">
    <source>
    </source>
</evidence>
<evidence type="ECO:0000303" key="5">
    <source>
    </source>
</evidence>
<evidence type="ECO:0000305" key="6"/>
<evidence type="ECO:0000305" key="7">
    <source>
    </source>
</evidence>
<evidence type="ECO:0000305" key="8">
    <source>
    </source>
</evidence>
<comment type="function">
    <text evidence="3">RNA-binding protein that functions in both mitochondrion and nucleus. In mitochondrion, it is associated with polysomes and may play a role in translation. Required during embryogenesis. In nucleus, might be involved in the regulation of its own gene expression.</text>
</comment>
<comment type="subunit">
    <text evidence="3 8">Interacts with NAP1;1 and TCP8. Able to bind mitochondrial RNA in vitro. Component of the mitochondrial ribosome small subunit (Probable).</text>
</comment>
<comment type="interaction">
    <interactant intactId="EBI-6913662">
        <id>Q9FME4</id>
    </interactant>
    <interactant intactId="EBI-4424361">
        <id>Q9SZI2</id>
        <label>NAP1;1</label>
    </interactant>
    <organismsDiffer>false</organismsDiffer>
    <experiments>4</experiments>
</comment>
<comment type="interaction">
    <interactant intactId="EBI-6913662">
        <id>Q9FME4</id>
    </interactant>
    <interactant intactId="EBI-3134124">
        <id>Q9C518</id>
        <label>TCP8</label>
    </interactant>
    <organismsDiffer>false</organismsDiffer>
    <experiments>4</experiments>
</comment>
<comment type="subcellular location">
    <subcellularLocation>
        <location evidence="3 7">Mitochondrion matrix</location>
    </subcellularLocation>
    <subcellularLocation>
        <location evidence="3">Nucleus</location>
    </subcellularLocation>
    <text>Can localize to both mitochondrion and nucleus.</text>
</comment>
<comment type="tissue specificity">
    <text evidence="3">Expressed in root tips, lateral root primordia and leaf primordia. Highly detected in the mature pollen grains.</text>
</comment>
<comment type="disruption phenotype">
    <text evidence="3">Embryo-lethal at a early stage of development.</text>
</comment>
<comment type="similarity">
    <text evidence="6">Belongs to the PPR family. P subfamily.</text>
</comment>
<comment type="online information" name="Pentatricopeptide repeat proteins">
    <link uri="https://ppr.plantenergy.uwa.edu.au"/>
</comment>
<accession>Q9FME4</accession>
<accession>Q8LCR2</accession>
<reference key="1">
    <citation type="journal article" date="1997" name="DNA Res.">
        <title>Structural analysis of Arabidopsis thaliana chromosome 5. III. Sequence features of the regions of 1,191,918 bp covered by seventeen physically assigned P1 clones.</title>
        <authorList>
            <person name="Nakamura Y."/>
            <person name="Sato S."/>
            <person name="Kaneko T."/>
            <person name="Kotani H."/>
            <person name="Asamizu E."/>
            <person name="Miyajima N."/>
            <person name="Tabata S."/>
        </authorList>
    </citation>
    <scope>NUCLEOTIDE SEQUENCE [LARGE SCALE GENOMIC DNA]</scope>
    <source>
        <strain>cv. Columbia</strain>
    </source>
</reference>
<reference key="2">
    <citation type="journal article" date="2017" name="Plant J.">
        <title>Araport11: a complete reannotation of the Arabidopsis thaliana reference genome.</title>
        <authorList>
            <person name="Cheng C.Y."/>
            <person name="Krishnakumar V."/>
            <person name="Chan A.P."/>
            <person name="Thibaud-Nissen F."/>
            <person name="Schobel S."/>
            <person name="Town C.D."/>
        </authorList>
    </citation>
    <scope>GENOME REANNOTATION</scope>
    <source>
        <strain>cv. Columbia</strain>
    </source>
</reference>
<reference key="3">
    <citation type="submission" date="2002-03" db="EMBL/GenBank/DDBJ databases">
        <title>Full-length cDNA from Arabidopsis thaliana.</title>
        <authorList>
            <person name="Brover V.V."/>
            <person name="Troukhan M.E."/>
            <person name="Alexandrov N.A."/>
            <person name="Lu Y.-P."/>
            <person name="Flavell R.B."/>
            <person name="Feldmann K.A."/>
        </authorList>
    </citation>
    <scope>NUCLEOTIDE SEQUENCE [LARGE SCALE MRNA]</scope>
</reference>
<reference key="4">
    <citation type="journal article" date="2004" name="Plant Cell">
        <title>Genome-wide analysis of Arabidopsis pentatricopeptide repeat proteins reveals their essential role in organelle biogenesis.</title>
        <authorList>
            <person name="Lurin C."/>
            <person name="Andres C."/>
            <person name="Aubourg S."/>
            <person name="Bellaoui M."/>
            <person name="Bitton F."/>
            <person name="Bruyere C."/>
            <person name="Caboche M."/>
            <person name="Debast C."/>
            <person name="Gualberto J."/>
            <person name="Hoffmann B."/>
            <person name="Lecharny A."/>
            <person name="Le Ret M."/>
            <person name="Martin-Magniette M.-L."/>
            <person name="Mireau H."/>
            <person name="Peeters N."/>
            <person name="Renou J.-P."/>
            <person name="Szurek B."/>
            <person name="Taconnat L."/>
            <person name="Small I."/>
        </authorList>
    </citation>
    <scope>GENE FAMILY</scope>
</reference>
<reference key="5">
    <citation type="journal article" date="2011" name="Plant Cell">
        <title>An Arabidopsis dual-localized pentatricopeptide repeat protein interacts with nuclear proteins involved in gene expression regulation.</title>
        <authorList>
            <person name="Hammani K."/>
            <person name="Gobert A."/>
            <person name="Hleibieh K."/>
            <person name="Choulier L."/>
            <person name="Small I."/>
            <person name="Giege P."/>
        </authorList>
    </citation>
    <scope>SUBCELLULAR LOCATION</scope>
    <scope>INTERACTION WITH NAP1;1 AND TCP8</scope>
    <scope>DISRUPTION PHENOTYPE</scope>
    <scope>FUNCTION</scope>
    <scope>TISSUE SPECIFICITY</scope>
    <scope>RNA-BINDING</scope>
</reference>
<reference key="6">
    <citation type="journal article" date="2015" name="J. Exp. Bot.">
        <title>Identification of cleavage sites and substrate proteins for two mitochondrial intermediate peptidases in Arabidopsis thaliana.</title>
        <authorList>
            <person name="Carrie C."/>
            <person name="Venne A.S."/>
            <person name="Zahedi R.P."/>
            <person name="Soll J."/>
        </authorList>
    </citation>
    <scope>IDENTIFICATION BY MASS SPECTROMETRY</scope>
    <scope>CLEAVAGE OF TRANSIT PEPTIDE AFTER PHE-59</scope>
</reference>
<reference key="7">
    <citation type="journal article" date="2023" name="Plant Cell">
        <title>An updated nomenclature for plant ribosomal protein genes.</title>
        <authorList>
            <person name="Scarpin M.R."/>
            <person name="Busche M."/>
            <person name="Martinez R.E."/>
            <person name="Harper L.C."/>
            <person name="Reiser L."/>
            <person name="Szakonyi D."/>
            <person name="Merchante C."/>
            <person name="Lan T."/>
            <person name="Xiong W."/>
            <person name="Mo B."/>
            <person name="Tang G."/>
            <person name="Chen X."/>
            <person name="Bailey-Serres J."/>
            <person name="Browning K.S."/>
            <person name="Brunkard J.O."/>
        </authorList>
    </citation>
    <scope>NOMENCLATURE</scope>
</reference>
<name>PP438_ARATH</name>
<feature type="transit peptide" description="Mitochondrion" evidence="4">
    <location>
        <begin position="1"/>
        <end position="59"/>
    </location>
</feature>
<feature type="chain" id="PRO_0000363575" description="Small ribosomal subunit protein mL104 (rPPR9)">
    <location>
        <begin position="60"/>
        <end position="521"/>
    </location>
</feature>
<feature type="repeat" description="PPR 1">
    <location>
        <begin position="174"/>
        <end position="204"/>
    </location>
</feature>
<feature type="repeat" description="PPR 2">
    <location>
        <begin position="210"/>
        <end position="240"/>
    </location>
</feature>
<feature type="repeat" description="PPR 3">
    <location>
        <begin position="244"/>
        <end position="278"/>
    </location>
</feature>
<feature type="repeat" description="PPR 4">
    <location>
        <begin position="279"/>
        <end position="313"/>
    </location>
</feature>
<feature type="repeat" description="PPR 5">
    <location>
        <begin position="321"/>
        <end position="355"/>
    </location>
</feature>
<feature type="repeat" description="PPR 6">
    <location>
        <begin position="356"/>
        <end position="390"/>
    </location>
</feature>
<feature type="repeat" description="PPR 7">
    <location>
        <begin position="393"/>
        <end position="427"/>
    </location>
</feature>
<feature type="repeat" description="PPR 8">
    <location>
        <begin position="428"/>
        <end position="462"/>
    </location>
</feature>
<feature type="region of interest" description="Disordered" evidence="2">
    <location>
        <begin position="480"/>
        <end position="499"/>
    </location>
</feature>
<feature type="short sequence motif" description="Nuclear localization signal" evidence="1">
    <location>
        <begin position="486"/>
        <end position="503"/>
    </location>
</feature>
<feature type="compositionally biased region" description="Basic and acidic residues" evidence="2">
    <location>
        <begin position="480"/>
        <end position="495"/>
    </location>
</feature>
<feature type="sequence conflict" description="In Ref. 3; AAM63453." evidence="6" ref="3">
    <original>E</original>
    <variation>G</variation>
    <location>
        <position position="164"/>
    </location>
</feature>
<proteinExistence type="evidence at protein level"/>
<keyword id="KW-0002">3D-structure</keyword>
<keyword id="KW-0496">Mitochondrion</keyword>
<keyword id="KW-0539">Nucleus</keyword>
<keyword id="KW-1185">Reference proteome</keyword>
<keyword id="KW-0677">Repeat</keyword>
<keyword id="KW-0687">Ribonucleoprotein</keyword>
<keyword id="KW-0689">Ribosomal protein</keyword>
<keyword id="KW-0694">RNA-binding</keyword>
<keyword id="KW-0804">Transcription</keyword>
<keyword id="KW-0805">Transcription regulation</keyword>
<keyword id="KW-0809">Transit peptide</keyword>
<keyword id="KW-0810">Translation regulation</keyword>